<sequence length="154" mass="17177">MHCPFCRHPDSRVIDSRETDEGQAIRRRRSCPECGRRFTTVETAVLAVVKRSGVTEPFSREKVISGVRRACQGRQVDDDALNLLAQQVEDSVRAAGSPEIPSHDVGLAILGPLRELDEVAYLRFASVYRSFSSADDFAREIEALRAHRNLSAHS</sequence>
<name>NRDR_MYCBO</name>
<keyword id="KW-0067">ATP-binding</keyword>
<keyword id="KW-0238">DNA-binding</keyword>
<keyword id="KW-0479">Metal-binding</keyword>
<keyword id="KW-0547">Nucleotide-binding</keyword>
<keyword id="KW-1185">Reference proteome</keyword>
<keyword id="KW-0678">Repressor</keyword>
<keyword id="KW-0804">Transcription</keyword>
<keyword id="KW-0805">Transcription regulation</keyword>
<keyword id="KW-0862">Zinc</keyword>
<keyword id="KW-0863">Zinc-finger</keyword>
<reference key="1">
    <citation type="journal article" date="2003" name="Proc. Natl. Acad. Sci. U.S.A.">
        <title>The complete genome sequence of Mycobacterium bovis.</title>
        <authorList>
            <person name="Garnier T."/>
            <person name="Eiglmeier K."/>
            <person name="Camus J.-C."/>
            <person name="Medina N."/>
            <person name="Mansoor H."/>
            <person name="Pryor M."/>
            <person name="Duthoy S."/>
            <person name="Grondin S."/>
            <person name="Lacroix C."/>
            <person name="Monsempe C."/>
            <person name="Simon S."/>
            <person name="Harris B."/>
            <person name="Atkin R."/>
            <person name="Doggett J."/>
            <person name="Mayes R."/>
            <person name="Keating L."/>
            <person name="Wheeler P.R."/>
            <person name="Parkhill J."/>
            <person name="Barrell B.G."/>
            <person name="Cole S.T."/>
            <person name="Gordon S.V."/>
            <person name="Hewinson R.G."/>
        </authorList>
    </citation>
    <scope>NUCLEOTIDE SEQUENCE [LARGE SCALE GENOMIC DNA]</scope>
    <source>
        <strain>ATCC BAA-935 / AF2122/97</strain>
    </source>
</reference>
<reference key="2">
    <citation type="journal article" date="2017" name="Genome Announc.">
        <title>Updated reference genome sequence and annotation of Mycobacterium bovis AF2122/97.</title>
        <authorList>
            <person name="Malone K.M."/>
            <person name="Farrell D."/>
            <person name="Stuber T.P."/>
            <person name="Schubert O.T."/>
            <person name="Aebersold R."/>
            <person name="Robbe-Austerman S."/>
            <person name="Gordon S.V."/>
        </authorList>
    </citation>
    <scope>NUCLEOTIDE SEQUENCE [LARGE SCALE GENOMIC DNA]</scope>
    <scope>GENOME REANNOTATION</scope>
    <source>
        <strain>ATCC BAA-935 / AF2122/97</strain>
    </source>
</reference>
<protein>
    <recommendedName>
        <fullName evidence="1">Transcriptional repressor NrdR</fullName>
    </recommendedName>
</protein>
<evidence type="ECO:0000255" key="1">
    <source>
        <dbReference type="HAMAP-Rule" id="MF_00440"/>
    </source>
</evidence>
<feature type="chain" id="PRO_0000182318" description="Transcriptional repressor NrdR">
    <location>
        <begin position="1"/>
        <end position="154"/>
    </location>
</feature>
<feature type="domain" description="ATP-cone" evidence="1">
    <location>
        <begin position="46"/>
        <end position="136"/>
    </location>
</feature>
<feature type="zinc finger region" evidence="1">
    <location>
        <begin position="3"/>
        <end position="34"/>
    </location>
</feature>
<gene>
    <name evidence="1" type="primary">nrdR</name>
    <name type="ordered locus">BQ2027_MB2737C</name>
</gene>
<proteinExistence type="inferred from homology"/>
<accession>P67314</accession>
<accession>A0A1R3Y3Z6</accession>
<accession>O07217</accession>
<accession>X2BM29</accession>
<organism>
    <name type="scientific">Mycobacterium bovis (strain ATCC BAA-935 / AF2122/97)</name>
    <dbReference type="NCBI Taxonomy" id="233413"/>
    <lineage>
        <taxon>Bacteria</taxon>
        <taxon>Bacillati</taxon>
        <taxon>Actinomycetota</taxon>
        <taxon>Actinomycetes</taxon>
        <taxon>Mycobacteriales</taxon>
        <taxon>Mycobacteriaceae</taxon>
        <taxon>Mycobacterium</taxon>
        <taxon>Mycobacterium tuberculosis complex</taxon>
    </lineage>
</organism>
<dbReference type="EMBL" id="LT708304">
    <property type="protein sequence ID" value="SIU01355.1"/>
    <property type="molecule type" value="Genomic_DNA"/>
</dbReference>
<dbReference type="RefSeq" id="NP_856383.1">
    <property type="nucleotide sequence ID" value="NC_002945.3"/>
</dbReference>
<dbReference type="RefSeq" id="WP_003413973.1">
    <property type="nucleotide sequence ID" value="NC_002945.4"/>
</dbReference>
<dbReference type="SMR" id="P67314"/>
<dbReference type="GeneID" id="45426705"/>
<dbReference type="KEGG" id="mbo:BQ2027_MB2737C"/>
<dbReference type="PATRIC" id="fig|233413.5.peg.3000"/>
<dbReference type="Proteomes" id="UP000001419">
    <property type="component" value="Chromosome"/>
</dbReference>
<dbReference type="GO" id="GO:0005524">
    <property type="term" value="F:ATP binding"/>
    <property type="evidence" value="ECO:0007669"/>
    <property type="project" value="UniProtKB-KW"/>
</dbReference>
<dbReference type="GO" id="GO:0003677">
    <property type="term" value="F:DNA binding"/>
    <property type="evidence" value="ECO:0007669"/>
    <property type="project" value="UniProtKB-KW"/>
</dbReference>
<dbReference type="GO" id="GO:0008270">
    <property type="term" value="F:zinc ion binding"/>
    <property type="evidence" value="ECO:0007669"/>
    <property type="project" value="UniProtKB-UniRule"/>
</dbReference>
<dbReference type="GO" id="GO:0045892">
    <property type="term" value="P:negative regulation of DNA-templated transcription"/>
    <property type="evidence" value="ECO:0007669"/>
    <property type="project" value="UniProtKB-UniRule"/>
</dbReference>
<dbReference type="HAMAP" id="MF_00440">
    <property type="entry name" value="NrdR"/>
    <property type="match status" value="1"/>
</dbReference>
<dbReference type="InterPro" id="IPR005144">
    <property type="entry name" value="ATP-cone_dom"/>
</dbReference>
<dbReference type="InterPro" id="IPR055173">
    <property type="entry name" value="NrdR-like_N"/>
</dbReference>
<dbReference type="InterPro" id="IPR003796">
    <property type="entry name" value="RNR_NrdR-like"/>
</dbReference>
<dbReference type="NCBIfam" id="TIGR00244">
    <property type="entry name" value="transcriptional regulator NrdR"/>
    <property type="match status" value="1"/>
</dbReference>
<dbReference type="PANTHER" id="PTHR30455">
    <property type="entry name" value="TRANSCRIPTIONAL REPRESSOR NRDR"/>
    <property type="match status" value="1"/>
</dbReference>
<dbReference type="PANTHER" id="PTHR30455:SF2">
    <property type="entry name" value="TRANSCRIPTIONAL REPRESSOR NRDR"/>
    <property type="match status" value="1"/>
</dbReference>
<dbReference type="Pfam" id="PF03477">
    <property type="entry name" value="ATP-cone"/>
    <property type="match status" value="1"/>
</dbReference>
<dbReference type="Pfam" id="PF22811">
    <property type="entry name" value="Zn_ribbon_NrdR"/>
    <property type="match status" value="1"/>
</dbReference>
<dbReference type="PROSITE" id="PS51161">
    <property type="entry name" value="ATP_CONE"/>
    <property type="match status" value="1"/>
</dbReference>
<comment type="function">
    <text evidence="1">Negatively regulates transcription of bacterial ribonucleotide reductase nrd genes and operons by binding to NrdR-boxes.</text>
</comment>
<comment type="cofactor">
    <cofactor evidence="1">
        <name>Zn(2+)</name>
        <dbReference type="ChEBI" id="CHEBI:29105"/>
    </cofactor>
    <text evidence="1">Binds 1 zinc ion.</text>
</comment>
<comment type="similarity">
    <text evidence="1">Belongs to the NrdR family.</text>
</comment>